<gene>
    <name evidence="1" type="primary">hisI</name>
    <name type="ordered locus">BMA2707</name>
</gene>
<proteinExistence type="inferred from homology"/>
<evidence type="ECO:0000255" key="1">
    <source>
        <dbReference type="HAMAP-Rule" id="MF_01021"/>
    </source>
</evidence>
<dbReference type="EC" id="3.5.4.19" evidence="1"/>
<dbReference type="EMBL" id="CP000010">
    <property type="protein sequence ID" value="AAU48274.1"/>
    <property type="molecule type" value="Genomic_DNA"/>
</dbReference>
<dbReference type="RefSeq" id="WP_004201279.1">
    <property type="nucleotide sequence ID" value="NC_006348.1"/>
</dbReference>
<dbReference type="RefSeq" id="YP_104228.1">
    <property type="nucleotide sequence ID" value="NC_006348.1"/>
</dbReference>
<dbReference type="SMR" id="Q62GE6"/>
<dbReference type="GeneID" id="93061749"/>
<dbReference type="KEGG" id="bma:BMA2707"/>
<dbReference type="PATRIC" id="fig|243160.12.peg.2777"/>
<dbReference type="eggNOG" id="COG0139">
    <property type="taxonomic scope" value="Bacteria"/>
</dbReference>
<dbReference type="HOGENOM" id="CLU_048577_5_0_4"/>
<dbReference type="UniPathway" id="UPA00031">
    <property type="reaction ID" value="UER00008"/>
</dbReference>
<dbReference type="Proteomes" id="UP000006693">
    <property type="component" value="Chromosome 1"/>
</dbReference>
<dbReference type="GO" id="GO:0005737">
    <property type="term" value="C:cytoplasm"/>
    <property type="evidence" value="ECO:0007669"/>
    <property type="project" value="UniProtKB-SubCell"/>
</dbReference>
<dbReference type="GO" id="GO:0000287">
    <property type="term" value="F:magnesium ion binding"/>
    <property type="evidence" value="ECO:0007669"/>
    <property type="project" value="UniProtKB-UniRule"/>
</dbReference>
<dbReference type="GO" id="GO:0004635">
    <property type="term" value="F:phosphoribosyl-AMP cyclohydrolase activity"/>
    <property type="evidence" value="ECO:0007669"/>
    <property type="project" value="UniProtKB-UniRule"/>
</dbReference>
<dbReference type="GO" id="GO:0008270">
    <property type="term" value="F:zinc ion binding"/>
    <property type="evidence" value="ECO:0007669"/>
    <property type="project" value="UniProtKB-UniRule"/>
</dbReference>
<dbReference type="GO" id="GO:0000105">
    <property type="term" value="P:L-histidine biosynthetic process"/>
    <property type="evidence" value="ECO:0007669"/>
    <property type="project" value="UniProtKB-UniRule"/>
</dbReference>
<dbReference type="FunFam" id="3.10.20.810:FF:000001">
    <property type="entry name" value="Histidine biosynthesis bifunctional protein HisIE"/>
    <property type="match status" value="1"/>
</dbReference>
<dbReference type="Gene3D" id="3.10.20.810">
    <property type="entry name" value="Phosphoribosyl-AMP cyclohydrolase"/>
    <property type="match status" value="1"/>
</dbReference>
<dbReference type="HAMAP" id="MF_01021">
    <property type="entry name" value="HisI"/>
    <property type="match status" value="1"/>
</dbReference>
<dbReference type="InterPro" id="IPR026660">
    <property type="entry name" value="PRA-CH"/>
</dbReference>
<dbReference type="InterPro" id="IPR002496">
    <property type="entry name" value="PRib_AMP_CycHydrolase_dom"/>
</dbReference>
<dbReference type="InterPro" id="IPR038019">
    <property type="entry name" value="PRib_AMP_CycHydrolase_sf"/>
</dbReference>
<dbReference type="NCBIfam" id="NF000768">
    <property type="entry name" value="PRK00051.1"/>
    <property type="match status" value="1"/>
</dbReference>
<dbReference type="PANTHER" id="PTHR42945">
    <property type="entry name" value="HISTIDINE BIOSYNTHESIS BIFUNCTIONAL PROTEIN"/>
    <property type="match status" value="1"/>
</dbReference>
<dbReference type="PANTHER" id="PTHR42945:SF1">
    <property type="entry name" value="HISTIDINE BIOSYNTHESIS BIFUNCTIONAL PROTEIN HIS7"/>
    <property type="match status" value="1"/>
</dbReference>
<dbReference type="Pfam" id="PF01502">
    <property type="entry name" value="PRA-CH"/>
    <property type="match status" value="1"/>
</dbReference>
<dbReference type="SUPFAM" id="SSF141734">
    <property type="entry name" value="HisI-like"/>
    <property type="match status" value="1"/>
</dbReference>
<protein>
    <recommendedName>
        <fullName evidence="1">Phosphoribosyl-AMP cyclohydrolase</fullName>
        <shortName evidence="1">PRA-CH</shortName>
        <ecNumber evidence="1">3.5.4.19</ecNumber>
    </recommendedName>
</protein>
<feature type="chain" id="PRO_0000229813" description="Phosphoribosyl-AMP cyclohydrolase">
    <location>
        <begin position="1"/>
        <end position="137"/>
    </location>
</feature>
<feature type="binding site" evidence="1">
    <location>
        <position position="83"/>
    </location>
    <ligand>
        <name>Mg(2+)</name>
        <dbReference type="ChEBI" id="CHEBI:18420"/>
    </ligand>
</feature>
<feature type="binding site" evidence="1">
    <location>
        <position position="84"/>
    </location>
    <ligand>
        <name>Zn(2+)</name>
        <dbReference type="ChEBI" id="CHEBI:29105"/>
        <note>ligand shared between dimeric partners</note>
    </ligand>
</feature>
<feature type="binding site" evidence="1">
    <location>
        <position position="85"/>
    </location>
    <ligand>
        <name>Mg(2+)</name>
        <dbReference type="ChEBI" id="CHEBI:18420"/>
    </ligand>
</feature>
<feature type="binding site" evidence="1">
    <location>
        <position position="87"/>
    </location>
    <ligand>
        <name>Mg(2+)</name>
        <dbReference type="ChEBI" id="CHEBI:18420"/>
    </ligand>
</feature>
<feature type="binding site" evidence="1">
    <location>
        <position position="101"/>
    </location>
    <ligand>
        <name>Zn(2+)</name>
        <dbReference type="ChEBI" id="CHEBI:29105"/>
        <note>ligand shared between dimeric partners</note>
    </ligand>
</feature>
<feature type="binding site" evidence="1">
    <location>
        <position position="108"/>
    </location>
    <ligand>
        <name>Zn(2+)</name>
        <dbReference type="ChEBI" id="CHEBI:29105"/>
        <note>ligand shared between dimeric partners</note>
    </ligand>
</feature>
<name>HIS3_BURMA</name>
<accession>Q62GE6</accession>
<organism>
    <name type="scientific">Burkholderia mallei (strain ATCC 23344)</name>
    <dbReference type="NCBI Taxonomy" id="243160"/>
    <lineage>
        <taxon>Bacteria</taxon>
        <taxon>Pseudomonadati</taxon>
        <taxon>Pseudomonadota</taxon>
        <taxon>Betaproteobacteria</taxon>
        <taxon>Burkholderiales</taxon>
        <taxon>Burkholderiaceae</taxon>
        <taxon>Burkholderia</taxon>
        <taxon>pseudomallei group</taxon>
    </lineage>
</organism>
<keyword id="KW-0028">Amino-acid biosynthesis</keyword>
<keyword id="KW-0963">Cytoplasm</keyword>
<keyword id="KW-0368">Histidine biosynthesis</keyword>
<keyword id="KW-0378">Hydrolase</keyword>
<keyword id="KW-0460">Magnesium</keyword>
<keyword id="KW-0479">Metal-binding</keyword>
<keyword id="KW-1185">Reference proteome</keyword>
<keyword id="KW-0862">Zinc</keyword>
<sequence length="137" mass="15699">MNAEAKPGDWLGKVRWDANGLVPVIAQDAATNDVLMFAWMNRDALAKTIELKRAVYYSRSRQRLWFKGEESGHVQHVHEVRLDCDEDVVLLKVEQVEGIACHTGRRSCFFQKFEGTVDDGEWVAVDPVLKDPEHIYK</sequence>
<comment type="function">
    <text evidence="1">Catalyzes the hydrolysis of the adenine ring of phosphoribosyl-AMP.</text>
</comment>
<comment type="catalytic activity">
    <reaction evidence="1">
        <text>1-(5-phospho-beta-D-ribosyl)-5'-AMP + H2O = 1-(5-phospho-beta-D-ribosyl)-5-[(5-phospho-beta-D-ribosylamino)methylideneamino]imidazole-4-carboxamide</text>
        <dbReference type="Rhea" id="RHEA:20049"/>
        <dbReference type="ChEBI" id="CHEBI:15377"/>
        <dbReference type="ChEBI" id="CHEBI:58435"/>
        <dbReference type="ChEBI" id="CHEBI:59457"/>
        <dbReference type="EC" id="3.5.4.19"/>
    </reaction>
</comment>
<comment type="cofactor">
    <cofactor evidence="1">
        <name>Mg(2+)</name>
        <dbReference type="ChEBI" id="CHEBI:18420"/>
    </cofactor>
    <text evidence="1">Binds 1 Mg(2+) ion per subunit.</text>
</comment>
<comment type="cofactor">
    <cofactor evidence="1">
        <name>Zn(2+)</name>
        <dbReference type="ChEBI" id="CHEBI:29105"/>
    </cofactor>
    <text evidence="1">Binds 1 zinc ion per subunit.</text>
</comment>
<comment type="pathway">
    <text evidence="1">Amino-acid biosynthesis; L-histidine biosynthesis; L-histidine from 5-phospho-alpha-D-ribose 1-diphosphate: step 3/9.</text>
</comment>
<comment type="subunit">
    <text evidence="1">Homodimer.</text>
</comment>
<comment type="subcellular location">
    <subcellularLocation>
        <location evidence="1">Cytoplasm</location>
    </subcellularLocation>
</comment>
<comment type="similarity">
    <text evidence="1">Belongs to the PRA-CH family.</text>
</comment>
<reference key="1">
    <citation type="journal article" date="2004" name="Proc. Natl. Acad. Sci. U.S.A.">
        <title>Structural flexibility in the Burkholderia mallei genome.</title>
        <authorList>
            <person name="Nierman W.C."/>
            <person name="DeShazer D."/>
            <person name="Kim H.S."/>
            <person name="Tettelin H."/>
            <person name="Nelson K.E."/>
            <person name="Feldblyum T.V."/>
            <person name="Ulrich R.L."/>
            <person name="Ronning C.M."/>
            <person name="Brinkac L.M."/>
            <person name="Daugherty S.C."/>
            <person name="Davidsen T.D."/>
            <person name="DeBoy R.T."/>
            <person name="Dimitrov G."/>
            <person name="Dodson R.J."/>
            <person name="Durkin A.S."/>
            <person name="Gwinn M.L."/>
            <person name="Haft D.H."/>
            <person name="Khouri H.M."/>
            <person name="Kolonay J.F."/>
            <person name="Madupu R."/>
            <person name="Mohammoud Y."/>
            <person name="Nelson W.C."/>
            <person name="Radune D."/>
            <person name="Romero C.M."/>
            <person name="Sarria S."/>
            <person name="Selengut J."/>
            <person name="Shamblin C."/>
            <person name="Sullivan S.A."/>
            <person name="White O."/>
            <person name="Yu Y."/>
            <person name="Zafar N."/>
            <person name="Zhou L."/>
            <person name="Fraser C.M."/>
        </authorList>
    </citation>
    <scope>NUCLEOTIDE SEQUENCE [LARGE SCALE GENOMIC DNA]</scope>
    <source>
        <strain>ATCC 23344</strain>
    </source>
</reference>